<feature type="chain" id="PRO_0000222276" description="Uncharacterized 13.1 kDa protein">
    <location>
        <begin position="1"/>
        <end position="113"/>
    </location>
</feature>
<feature type="region of interest" description="Disordered" evidence="2">
    <location>
        <begin position="94"/>
        <end position="113"/>
    </location>
</feature>
<feature type="compositionally biased region" description="Basic and acidic residues" evidence="2">
    <location>
        <begin position="96"/>
        <end position="113"/>
    </location>
</feature>
<keyword id="KW-1035">Host cytoplasm</keyword>
<keyword id="KW-0945">Host-virus interaction</keyword>
<keyword id="KW-1090">Inhibition of host innate immune response by virus</keyword>
<keyword id="KW-1185">Reference proteome</keyword>
<keyword id="KW-0941">Suppressor of RNA silencing</keyword>
<keyword id="KW-0899">Viral immunoevasion</keyword>
<organism>
    <name type="scientific">African cassava mosaic virus (isolate Nigerian)</name>
    <name type="common">ACMV</name>
    <name type="synonym">Cassava latent virus (isolate Nigerian)</name>
    <dbReference type="NCBI Taxonomy" id="222073"/>
    <lineage>
        <taxon>Viruses</taxon>
        <taxon>Monodnaviria</taxon>
        <taxon>Shotokuvirae</taxon>
        <taxon>Cressdnaviricota</taxon>
        <taxon>Repensiviricetes</taxon>
        <taxon>Geplafuvirales</taxon>
        <taxon>Geminiviridae</taxon>
        <taxon>Begomovirus</taxon>
        <taxon>Begomovirus manihotis</taxon>
    </lineage>
</organism>
<sequence length="113" mass="13131">MWDPLVNEFPDSVHGLRCMLAIKYLQALEDTYEPSTLGHDLVRDLISVIRARNYVEATRRYHHFHSRLEGSSKAELRQPIQEPCYCPHCPRHKSKTGLDEQAHVQKAHDVQDV</sequence>
<protein>
    <recommendedName>
        <fullName>Uncharacterized 13.1 kDa protein</fullName>
    </recommendedName>
</protein>
<organismHost>
    <name type="scientific">Hewittia sublobata</name>
    <dbReference type="NCBI Taxonomy" id="197394"/>
</organismHost>
<organismHost>
    <name type="scientific">Jatropha multifida</name>
    <name type="common">Coralbush</name>
    <dbReference type="NCBI Taxonomy" id="3996"/>
</organismHost>
<organismHost>
    <name type="scientific">Laportea</name>
    <dbReference type="NCBI Taxonomy" id="194268"/>
</organismHost>
<organismHost>
    <name type="scientific">Manihot esculenta</name>
    <name type="common">Cassava</name>
    <name type="synonym">Jatropha manihot</name>
    <dbReference type="NCBI Taxonomy" id="3983"/>
</organismHost>
<reference key="1">
    <citation type="journal article" date="1990" name="Nucleic Acids Res.">
        <title>Nucleotide sequence of the infectious cloned DNA components of African cassava mosaic virus (Nigerian strain).</title>
        <authorList>
            <person name="Morris B."/>
            <person name="Coates L."/>
            <person name="Lowe S."/>
            <person name="Richardson K."/>
            <person name="Eddy P."/>
        </authorList>
    </citation>
    <scope>NUCLEOTIDE SEQUENCE [GENOMIC DNA]</scope>
</reference>
<evidence type="ECO:0000250" key="1"/>
<evidence type="ECO:0000256" key="2">
    <source>
        <dbReference type="SAM" id="MobiDB-lite"/>
    </source>
</evidence>
<evidence type="ECO:0000305" key="3"/>
<name>AV2_CLVN</name>
<accession>P14967</accession>
<comment type="function">
    <text evidence="1">Through its interaction with host SGS3, acts as a suppressor of RNA-mediated gene silencing, also known as post-transcriptional gene silencing (PTGS), a mechanism of plant viral defense that limits the accumulation of viral RNAs.</text>
</comment>
<comment type="subunit">
    <text evidence="1">Interacts with host SGS3.</text>
</comment>
<comment type="subcellular location">
    <subcellularLocation>
        <location evidence="1">Host cytoplasm</location>
        <location evidence="1">Host perinuclear region</location>
    </subcellularLocation>
    <text evidence="1">Accumulates in inclusion bodies in the cell periphery. May interact with the ER network from the perinuclear region out to the cell periphery (By similarity).</text>
</comment>
<comment type="similarity">
    <text evidence="3">Belongs to the geminiviridae protein AV2/V2 family.</text>
</comment>
<proteinExistence type="inferred from homology"/>
<dbReference type="EMBL" id="X17095">
    <property type="protein sequence ID" value="CAA34949.1"/>
    <property type="molecule type" value="Genomic_DNA"/>
</dbReference>
<dbReference type="PIR" id="S07590">
    <property type="entry name" value="S07590"/>
</dbReference>
<dbReference type="Proteomes" id="UP000008453">
    <property type="component" value="Genome"/>
</dbReference>
<dbReference type="GO" id="GO:0044220">
    <property type="term" value="C:host cell perinuclear region of cytoplasm"/>
    <property type="evidence" value="ECO:0007669"/>
    <property type="project" value="UniProtKB-SubCell"/>
</dbReference>
<dbReference type="GO" id="GO:0060967">
    <property type="term" value="P:negative regulation of gene silencing by regulatory ncRNA"/>
    <property type="evidence" value="ECO:0007669"/>
    <property type="project" value="InterPro"/>
</dbReference>
<dbReference type="GO" id="GO:0052170">
    <property type="term" value="P:symbiont-mediated suppression of host innate immune response"/>
    <property type="evidence" value="ECO:0007669"/>
    <property type="project" value="UniProtKB-KW"/>
</dbReference>
<dbReference type="InterPro" id="IPR002511">
    <property type="entry name" value="Gemini_V2"/>
</dbReference>
<dbReference type="InterPro" id="IPR005159">
    <property type="entry name" value="WCCH"/>
</dbReference>
<dbReference type="Pfam" id="PF01524">
    <property type="entry name" value="Gemini_V2"/>
    <property type="match status" value="1"/>
</dbReference>
<dbReference type="Pfam" id="PF03716">
    <property type="entry name" value="WCCH"/>
    <property type="match status" value="1"/>
</dbReference>